<proteinExistence type="inferred from homology"/>
<keyword id="KW-0067">ATP-binding</keyword>
<keyword id="KW-0963">Cytoplasm</keyword>
<keyword id="KW-0436">Ligase</keyword>
<keyword id="KW-0460">Magnesium</keyword>
<keyword id="KW-0479">Metal-binding</keyword>
<keyword id="KW-0547">Nucleotide-binding</keyword>
<keyword id="KW-0658">Purine biosynthesis</keyword>
<comment type="function">
    <text evidence="1">Part of the phosphoribosylformylglycinamidine synthase complex involved in the purines biosynthetic pathway. Catalyzes the ATP-dependent conversion of formylglycinamide ribonucleotide (FGAR) and glutamine to yield formylglycinamidine ribonucleotide (FGAM) and glutamate. The FGAM synthase complex is composed of three subunits. PurQ produces an ammonia molecule by converting glutamine to glutamate. PurL transfers the ammonia molecule to FGAR to form FGAM in an ATP-dependent manner. PurS interacts with PurQ and PurL and is thought to assist in the transfer of the ammonia molecule from PurQ to PurL.</text>
</comment>
<comment type="catalytic activity">
    <reaction evidence="1">
        <text>N(2)-formyl-N(1)-(5-phospho-beta-D-ribosyl)glycinamide + L-glutamine + ATP + H2O = 2-formamido-N(1)-(5-O-phospho-beta-D-ribosyl)acetamidine + L-glutamate + ADP + phosphate + H(+)</text>
        <dbReference type="Rhea" id="RHEA:17129"/>
        <dbReference type="ChEBI" id="CHEBI:15377"/>
        <dbReference type="ChEBI" id="CHEBI:15378"/>
        <dbReference type="ChEBI" id="CHEBI:29985"/>
        <dbReference type="ChEBI" id="CHEBI:30616"/>
        <dbReference type="ChEBI" id="CHEBI:43474"/>
        <dbReference type="ChEBI" id="CHEBI:58359"/>
        <dbReference type="ChEBI" id="CHEBI:147286"/>
        <dbReference type="ChEBI" id="CHEBI:147287"/>
        <dbReference type="ChEBI" id="CHEBI:456216"/>
        <dbReference type="EC" id="6.3.5.3"/>
    </reaction>
</comment>
<comment type="pathway">
    <text evidence="1">Purine metabolism; IMP biosynthesis via de novo pathway; 5-amino-1-(5-phospho-D-ribosyl)imidazole from N(2)-formyl-N(1)-(5-phospho-D-ribosyl)glycinamide: step 1/2.</text>
</comment>
<comment type="subunit">
    <text evidence="1">Monomer. Part of the FGAM synthase complex composed of 1 PurL, 1 PurQ and 2 PurS subunits.</text>
</comment>
<comment type="subcellular location">
    <subcellularLocation>
        <location evidence="1">Cytoplasm</location>
    </subcellularLocation>
</comment>
<comment type="similarity">
    <text evidence="1">Belongs to the FGAMS family.</text>
</comment>
<name>PURL_SACI6</name>
<organism>
    <name type="scientific">Saccharolobus islandicus (strain M.16.4 / Kamchatka #3)</name>
    <name type="common">Sulfolobus islandicus</name>
    <dbReference type="NCBI Taxonomy" id="426118"/>
    <lineage>
        <taxon>Archaea</taxon>
        <taxon>Thermoproteota</taxon>
        <taxon>Thermoprotei</taxon>
        <taxon>Sulfolobales</taxon>
        <taxon>Sulfolobaceae</taxon>
        <taxon>Saccharolobus</taxon>
    </lineage>
</organism>
<protein>
    <recommendedName>
        <fullName evidence="1">Phosphoribosylformylglycinamidine synthase subunit PurL</fullName>
        <shortName evidence="1">FGAM synthase</shortName>
        <ecNumber evidence="1">6.3.5.3</ecNumber>
    </recommendedName>
    <alternativeName>
        <fullName evidence="1">Formylglycinamide ribonucleotide amidotransferase subunit II</fullName>
        <shortName evidence="1">FGAR amidotransferase II</shortName>
        <shortName evidence="1">FGAR-AT II</shortName>
    </alternativeName>
    <alternativeName>
        <fullName evidence="1">Glutamine amidotransferase PurL</fullName>
    </alternativeName>
    <alternativeName>
        <fullName evidence="1">Phosphoribosylformylglycinamidine synthase subunit II</fullName>
    </alternativeName>
</protein>
<reference key="1">
    <citation type="journal article" date="2009" name="Proc. Natl. Acad. Sci. U.S.A.">
        <title>Biogeography of the Sulfolobus islandicus pan-genome.</title>
        <authorList>
            <person name="Reno M.L."/>
            <person name="Held N.L."/>
            <person name="Fields C.J."/>
            <person name="Burke P.V."/>
            <person name="Whitaker R.J."/>
        </authorList>
    </citation>
    <scope>NUCLEOTIDE SEQUENCE [LARGE SCALE GENOMIC DNA]</scope>
    <source>
        <strain>M.16.4 / Kamchatka #3</strain>
    </source>
</reference>
<evidence type="ECO:0000255" key="1">
    <source>
        <dbReference type="HAMAP-Rule" id="MF_00420"/>
    </source>
</evidence>
<sequence>MGLNLLPIEMDDIRKRLDREPNEIEWRVIDAVWSEHCSYKSSKIFLKSFSIDSPNVIMGIKDWQDAGAVDIGDGWAIVIKVESHNHPSAIDPFNGAATGVGGIIRDIISKGAKPIALMDMIRVGNLKIRKNVWLLKNIIAGIAAYGNSIGVPVVGGELSFDDTYNDNPLVDVAAIGIVRKDKIKPSIVDKAGLKLVLAGLTGIDGLGGASFASRKLSGEDEIGAVQIADPFAGKIILDITLEIADKVEAIKDLGGGGLAVAVTEMANGLGAIVDIEKIPLRVKNMNPADVIISETQERMLYAVEEKNVEEVCKAFEEYEYPCSVIGEITSEPIIKFRYFGKDLVSLPTNALLEPPKFLWPIKNVRKNVEEKNVDLPLESTIYTVLSHPDLVSKEWVYSQFDYEVNTSTVVKPGDANGAVVSLPNGKLLAIKADGNPDLCSEDAYECGKGIVAEAYRNLATVGARGMVAVDHLQFGDPKKPEVYYTFVEAIRGIGEATRFFNIPIVGGKVSFYNENSQGKPIKPTPLIVMAGLVQGKLLKNRVEDSSYVVLLGYTRKELGGSLLSKIFKVPSQAPKVRLQEDLLSSEVVIDAINEEKITFAKDISRGGLAASLFNIIVHGYGVEISTKSILSDTDNVVENLFSESSGRFVILTNEPEWIVEKSRSKGIVASIIGKVNKKTSILTIDNTDYDLKTIVNNYFNFLEEVIGNG</sequence>
<feature type="chain" id="PRO_1000206045" description="Phosphoribosylformylglycinamidine synthase subunit PurL">
    <location>
        <begin position="1"/>
        <end position="709"/>
    </location>
</feature>
<feature type="active site" evidence="1">
    <location>
        <position position="36"/>
    </location>
</feature>
<feature type="active site" description="Proton acceptor" evidence="1">
    <location>
        <position position="84"/>
    </location>
</feature>
<feature type="binding site" evidence="1">
    <location>
        <position position="39"/>
    </location>
    <ligand>
        <name>ATP</name>
        <dbReference type="ChEBI" id="CHEBI:30616"/>
    </ligand>
</feature>
<feature type="binding site" evidence="1">
    <location>
        <position position="80"/>
    </location>
    <ligand>
        <name>ATP</name>
        <dbReference type="ChEBI" id="CHEBI:30616"/>
    </ligand>
</feature>
<feature type="binding site" evidence="1">
    <location>
        <position position="82"/>
    </location>
    <ligand>
        <name>Mg(2+)</name>
        <dbReference type="ChEBI" id="CHEBI:18420"/>
        <label>1</label>
    </ligand>
</feature>
<feature type="binding site" evidence="1">
    <location>
        <begin position="83"/>
        <end position="86"/>
    </location>
    <ligand>
        <name>substrate</name>
    </ligand>
</feature>
<feature type="binding site" evidence="1">
    <location>
        <position position="105"/>
    </location>
    <ligand>
        <name>substrate</name>
    </ligand>
</feature>
<feature type="binding site" evidence="1">
    <location>
        <position position="106"/>
    </location>
    <ligand>
        <name>Mg(2+)</name>
        <dbReference type="ChEBI" id="CHEBI:18420"/>
        <label>2</label>
    </ligand>
</feature>
<feature type="binding site" evidence="1">
    <location>
        <position position="226"/>
    </location>
    <ligand>
        <name>substrate</name>
    </ligand>
</feature>
<feature type="binding site" evidence="1">
    <location>
        <position position="252"/>
    </location>
    <ligand>
        <name>Mg(2+)</name>
        <dbReference type="ChEBI" id="CHEBI:18420"/>
        <label>2</label>
    </ligand>
</feature>
<feature type="binding site" evidence="1">
    <location>
        <begin position="294"/>
        <end position="296"/>
    </location>
    <ligand>
        <name>substrate</name>
    </ligand>
</feature>
<feature type="binding site" evidence="1">
    <location>
        <position position="470"/>
    </location>
    <ligand>
        <name>ATP</name>
        <dbReference type="ChEBI" id="CHEBI:30616"/>
    </ligand>
</feature>
<feature type="binding site" evidence="1">
    <location>
        <position position="507"/>
    </location>
    <ligand>
        <name>ATP</name>
        <dbReference type="ChEBI" id="CHEBI:30616"/>
    </ligand>
</feature>
<feature type="binding site" evidence="1">
    <location>
        <position position="510"/>
    </location>
    <ligand>
        <name>substrate</name>
    </ligand>
</feature>
<dbReference type="EC" id="6.3.5.3" evidence="1"/>
<dbReference type="EMBL" id="CP001402">
    <property type="protein sequence ID" value="ACR42101.1"/>
    <property type="molecule type" value="Genomic_DNA"/>
</dbReference>
<dbReference type="RefSeq" id="WP_012735962.1">
    <property type="nucleotide sequence ID" value="NC_012726.1"/>
</dbReference>
<dbReference type="SMR" id="C4KHN7"/>
<dbReference type="GeneID" id="84061818"/>
<dbReference type="KEGG" id="sid:M164_1500"/>
<dbReference type="HOGENOM" id="CLU_003100_0_1_2"/>
<dbReference type="UniPathway" id="UPA00074">
    <property type="reaction ID" value="UER00128"/>
</dbReference>
<dbReference type="Proteomes" id="UP000001479">
    <property type="component" value="Chromosome"/>
</dbReference>
<dbReference type="GO" id="GO:0005737">
    <property type="term" value="C:cytoplasm"/>
    <property type="evidence" value="ECO:0007669"/>
    <property type="project" value="UniProtKB-SubCell"/>
</dbReference>
<dbReference type="GO" id="GO:0005524">
    <property type="term" value="F:ATP binding"/>
    <property type="evidence" value="ECO:0007669"/>
    <property type="project" value="UniProtKB-UniRule"/>
</dbReference>
<dbReference type="GO" id="GO:0000287">
    <property type="term" value="F:magnesium ion binding"/>
    <property type="evidence" value="ECO:0007669"/>
    <property type="project" value="UniProtKB-UniRule"/>
</dbReference>
<dbReference type="GO" id="GO:0004642">
    <property type="term" value="F:phosphoribosylformylglycinamidine synthase activity"/>
    <property type="evidence" value="ECO:0007669"/>
    <property type="project" value="UniProtKB-UniRule"/>
</dbReference>
<dbReference type="GO" id="GO:0006189">
    <property type="term" value="P:'de novo' IMP biosynthetic process"/>
    <property type="evidence" value="ECO:0007669"/>
    <property type="project" value="UniProtKB-UniRule"/>
</dbReference>
<dbReference type="CDD" id="cd02203">
    <property type="entry name" value="PurL_repeat1"/>
    <property type="match status" value="1"/>
</dbReference>
<dbReference type="CDD" id="cd02204">
    <property type="entry name" value="PurL_repeat2"/>
    <property type="match status" value="1"/>
</dbReference>
<dbReference type="Gene3D" id="3.90.650.10">
    <property type="entry name" value="PurM-like C-terminal domain"/>
    <property type="match status" value="2"/>
</dbReference>
<dbReference type="Gene3D" id="3.30.1330.10">
    <property type="entry name" value="PurM-like, N-terminal domain"/>
    <property type="match status" value="2"/>
</dbReference>
<dbReference type="HAMAP" id="MF_00420">
    <property type="entry name" value="PurL_2"/>
    <property type="match status" value="1"/>
</dbReference>
<dbReference type="InterPro" id="IPR010074">
    <property type="entry name" value="PRibForGlyAmidine_synth_PurL"/>
</dbReference>
<dbReference type="InterPro" id="IPR041609">
    <property type="entry name" value="PurL_linker"/>
</dbReference>
<dbReference type="InterPro" id="IPR010918">
    <property type="entry name" value="PurM-like_C_dom"/>
</dbReference>
<dbReference type="InterPro" id="IPR036676">
    <property type="entry name" value="PurM-like_C_sf"/>
</dbReference>
<dbReference type="InterPro" id="IPR016188">
    <property type="entry name" value="PurM-like_N"/>
</dbReference>
<dbReference type="InterPro" id="IPR036921">
    <property type="entry name" value="PurM-like_N_sf"/>
</dbReference>
<dbReference type="NCBIfam" id="TIGR01736">
    <property type="entry name" value="FGAM_synth_II"/>
    <property type="match status" value="1"/>
</dbReference>
<dbReference type="NCBIfam" id="NF002290">
    <property type="entry name" value="PRK01213.1"/>
    <property type="match status" value="1"/>
</dbReference>
<dbReference type="PANTHER" id="PTHR43555">
    <property type="entry name" value="PHOSPHORIBOSYLFORMYLGLYCINAMIDINE SYNTHASE SUBUNIT PURL"/>
    <property type="match status" value="1"/>
</dbReference>
<dbReference type="PANTHER" id="PTHR43555:SF1">
    <property type="entry name" value="PHOSPHORIBOSYLFORMYLGLYCINAMIDINE SYNTHASE SUBUNIT PURL"/>
    <property type="match status" value="1"/>
</dbReference>
<dbReference type="Pfam" id="PF00586">
    <property type="entry name" value="AIRS"/>
    <property type="match status" value="2"/>
</dbReference>
<dbReference type="Pfam" id="PF02769">
    <property type="entry name" value="AIRS_C"/>
    <property type="match status" value="2"/>
</dbReference>
<dbReference type="Pfam" id="PF18072">
    <property type="entry name" value="FGAR-AT_linker"/>
    <property type="match status" value="1"/>
</dbReference>
<dbReference type="PIRSF" id="PIRSF001587">
    <property type="entry name" value="FGAM_synthase_II"/>
    <property type="match status" value="1"/>
</dbReference>
<dbReference type="SUPFAM" id="SSF56042">
    <property type="entry name" value="PurM C-terminal domain-like"/>
    <property type="match status" value="2"/>
</dbReference>
<dbReference type="SUPFAM" id="SSF55326">
    <property type="entry name" value="PurM N-terminal domain-like"/>
    <property type="match status" value="2"/>
</dbReference>
<gene>
    <name evidence="1" type="primary">purL</name>
    <name type="ordered locus">M164_1500</name>
</gene>
<accession>C4KHN7</accession>